<comment type="function">
    <text evidence="3">Involved in the biosynthesis of L-aspartate-beta-semialdehyde which is a central intermediate in the biosynthesis of different amino acids (L-lysine, L-methionine, L-threonine). Catalyzes the phosphorylation of the beta-carboxyl group of L-aspartate to yield 4-phospho-L-aspartate.</text>
</comment>
<comment type="catalytic activity">
    <reaction evidence="3">
        <text>L-aspartate + ATP = 4-phospho-L-aspartate + ADP</text>
        <dbReference type="Rhea" id="RHEA:23776"/>
        <dbReference type="ChEBI" id="CHEBI:29991"/>
        <dbReference type="ChEBI" id="CHEBI:30616"/>
        <dbReference type="ChEBI" id="CHEBI:57535"/>
        <dbReference type="ChEBI" id="CHEBI:456216"/>
        <dbReference type="EC" id="2.7.2.4"/>
    </reaction>
</comment>
<comment type="activity regulation">
    <text evidence="3">Allosterically and strongly feedback inhibited by tryptophan. Addition of lysine alone slightly enhances activity. The simultaneous addition of lysine and tryptophan leads to very strong feedback inhibition of the enzyme. The feedback control by tryptophan is reduced in the presence of the compatible solutes hydroxyectoine or ectoine.</text>
</comment>
<comment type="biophysicochemical properties">
    <kinetics>
        <KM evidence="3">3.8 mM for ATP</KM>
        <KM evidence="3">21.6 mM for L-aspartate</KM>
        <Vmax evidence="3">5.1 umol/min/mg enzyme</Vmax>
    </kinetics>
</comment>
<comment type="pathway">
    <text>Amino-acid biosynthesis; L-lysine biosynthesis via DAP pathway; (S)-tetrahydrodipicolinate from L-aspartate: step 1/4.</text>
</comment>
<comment type="pathway">
    <text>Amino-acid biosynthesis; L-methionine biosynthesis via de novo pathway; L-homoserine from L-aspartate: step 1/3.</text>
</comment>
<comment type="pathway">
    <text>Amino-acid biosynthesis; L-threonine biosynthesis; L-threonine from L-aspartate: step 1/5.</text>
</comment>
<comment type="subcellular location">
    <subcellularLocation>
        <location evidence="1">Cytoplasm</location>
    </subcellularLocation>
</comment>
<comment type="similarity">
    <text evidence="4">Belongs to the aspartokinase family.</text>
</comment>
<sequence>MALIVQKFGGTSVGTVERIEQVAEKVKKFRDGGDDIVVVVSAMSGETNRLIDLAKQISEQPVPRELDVMVSTGEQVTIALLAMALIKRGVPAVSYTGNQVRILTDSAHTKARILQIDAQRIQRDIKAGRVVVVAGFQGVDEKGNITTLGRGGSDTTGVALAAALKADECQIYTDVDGVYTTDPRVVAKAQRLDKITFEEMLEMASLGSKVLQIRAVEFAGKYSVPLRVLHSFQEGPGTLITLDEEESMEQPIISGIAFNRDEAKLTIRGVPDTPGVAFKILGPISAANVEVDMIVQNVAHDNTTDFTFTVHRNDYNNALQVLQGIAAEMGAREAIGDTNIAKVSIVGVGMRSHAGVASRMFEALAKENINIQMISTSEIKVSVVIEEKYLELAVRALHTAFELDAPAGNTAE</sequence>
<dbReference type="EC" id="2.7.2.4"/>
<dbReference type="EMBL" id="CP000304">
    <property type="protein sequence ID" value="ABP79065.1"/>
    <property type="molecule type" value="Genomic_DNA"/>
</dbReference>
<dbReference type="RefSeq" id="WP_011912547.1">
    <property type="nucleotide sequence ID" value="NC_009434.1"/>
</dbReference>
<dbReference type="SMR" id="A4VJB4"/>
<dbReference type="KEGG" id="psa:PST_1370"/>
<dbReference type="eggNOG" id="COG0527">
    <property type="taxonomic scope" value="Bacteria"/>
</dbReference>
<dbReference type="HOGENOM" id="CLU_009116_3_2_6"/>
<dbReference type="SABIO-RK" id="A4VJB4"/>
<dbReference type="UniPathway" id="UPA00034">
    <property type="reaction ID" value="UER00015"/>
</dbReference>
<dbReference type="UniPathway" id="UPA00050">
    <property type="reaction ID" value="UER00461"/>
</dbReference>
<dbReference type="UniPathway" id="UPA00051">
    <property type="reaction ID" value="UER00462"/>
</dbReference>
<dbReference type="Proteomes" id="UP000000233">
    <property type="component" value="Chromosome"/>
</dbReference>
<dbReference type="GO" id="GO:0005829">
    <property type="term" value="C:cytosol"/>
    <property type="evidence" value="ECO:0007669"/>
    <property type="project" value="TreeGrafter"/>
</dbReference>
<dbReference type="GO" id="GO:0004072">
    <property type="term" value="F:aspartate kinase activity"/>
    <property type="evidence" value="ECO:0000314"/>
    <property type="project" value="UniProtKB"/>
</dbReference>
<dbReference type="GO" id="GO:0005524">
    <property type="term" value="F:ATP binding"/>
    <property type="evidence" value="ECO:0007669"/>
    <property type="project" value="UniProtKB-KW"/>
</dbReference>
<dbReference type="GO" id="GO:0019877">
    <property type="term" value="P:diaminopimelate biosynthetic process"/>
    <property type="evidence" value="ECO:0007669"/>
    <property type="project" value="UniProtKB-KW"/>
</dbReference>
<dbReference type="GO" id="GO:0009090">
    <property type="term" value="P:homoserine biosynthetic process"/>
    <property type="evidence" value="ECO:0007669"/>
    <property type="project" value="TreeGrafter"/>
</dbReference>
<dbReference type="GO" id="GO:0009089">
    <property type="term" value="P:lysine biosynthetic process via diaminopimelate"/>
    <property type="evidence" value="ECO:0007669"/>
    <property type="project" value="UniProtKB-UniPathway"/>
</dbReference>
<dbReference type="GO" id="GO:0009086">
    <property type="term" value="P:methionine biosynthetic process"/>
    <property type="evidence" value="ECO:0007669"/>
    <property type="project" value="UniProtKB-KW"/>
</dbReference>
<dbReference type="GO" id="GO:0009088">
    <property type="term" value="P:threonine biosynthetic process"/>
    <property type="evidence" value="ECO:0007669"/>
    <property type="project" value="UniProtKB-UniPathway"/>
</dbReference>
<dbReference type="CDD" id="cd04261">
    <property type="entry name" value="AAK_AKii-LysC-BS"/>
    <property type="match status" value="1"/>
</dbReference>
<dbReference type="CDD" id="cd04923">
    <property type="entry name" value="ACT_AK-LysC-DapG-like_2"/>
    <property type="match status" value="1"/>
</dbReference>
<dbReference type="CDD" id="cd04913">
    <property type="entry name" value="ACT_AKii-LysC-BS-like_1"/>
    <property type="match status" value="1"/>
</dbReference>
<dbReference type="FunFam" id="3.30.2130.10:FF:000002">
    <property type="entry name" value="Aspartokinase"/>
    <property type="match status" value="1"/>
</dbReference>
<dbReference type="FunFam" id="3.40.1160.10:FF:000002">
    <property type="entry name" value="Aspartokinase"/>
    <property type="match status" value="1"/>
</dbReference>
<dbReference type="Gene3D" id="3.40.1160.10">
    <property type="entry name" value="Acetylglutamate kinase-like"/>
    <property type="match status" value="1"/>
</dbReference>
<dbReference type="Gene3D" id="3.30.2130.10">
    <property type="entry name" value="VC0802-like"/>
    <property type="match status" value="1"/>
</dbReference>
<dbReference type="InterPro" id="IPR036393">
    <property type="entry name" value="AceGlu_kinase-like_sf"/>
</dbReference>
<dbReference type="InterPro" id="IPR045865">
    <property type="entry name" value="ACT-like_dom_sf"/>
</dbReference>
<dbReference type="InterPro" id="IPR054352">
    <property type="entry name" value="ACT_Aspartokinase"/>
</dbReference>
<dbReference type="InterPro" id="IPR002912">
    <property type="entry name" value="ACT_dom"/>
</dbReference>
<dbReference type="InterPro" id="IPR041740">
    <property type="entry name" value="AKii-LysC-BS"/>
</dbReference>
<dbReference type="InterPro" id="IPR001048">
    <property type="entry name" value="Asp/Glu/Uridylate_kinase"/>
</dbReference>
<dbReference type="InterPro" id="IPR005260">
    <property type="entry name" value="Asp_kin_monofn"/>
</dbReference>
<dbReference type="InterPro" id="IPR001341">
    <property type="entry name" value="Asp_kinase"/>
</dbReference>
<dbReference type="InterPro" id="IPR018042">
    <property type="entry name" value="Aspartate_kinase_CS"/>
</dbReference>
<dbReference type="NCBIfam" id="TIGR00656">
    <property type="entry name" value="asp_kin_monofn"/>
    <property type="match status" value="1"/>
</dbReference>
<dbReference type="NCBIfam" id="TIGR00657">
    <property type="entry name" value="asp_kinases"/>
    <property type="match status" value="1"/>
</dbReference>
<dbReference type="NCBIfam" id="NF005154">
    <property type="entry name" value="PRK06635.1-2"/>
    <property type="match status" value="1"/>
</dbReference>
<dbReference type="NCBIfam" id="NF005155">
    <property type="entry name" value="PRK06635.1-4"/>
    <property type="match status" value="1"/>
</dbReference>
<dbReference type="PANTHER" id="PTHR21499">
    <property type="entry name" value="ASPARTATE KINASE"/>
    <property type="match status" value="1"/>
</dbReference>
<dbReference type="PANTHER" id="PTHR21499:SF3">
    <property type="entry name" value="ASPARTOKINASE"/>
    <property type="match status" value="1"/>
</dbReference>
<dbReference type="Pfam" id="PF00696">
    <property type="entry name" value="AA_kinase"/>
    <property type="match status" value="1"/>
</dbReference>
<dbReference type="Pfam" id="PF01842">
    <property type="entry name" value="ACT"/>
    <property type="match status" value="1"/>
</dbReference>
<dbReference type="Pfam" id="PF22468">
    <property type="entry name" value="ACT_9"/>
    <property type="match status" value="1"/>
</dbReference>
<dbReference type="PIRSF" id="PIRSF000726">
    <property type="entry name" value="Asp_kin"/>
    <property type="match status" value="1"/>
</dbReference>
<dbReference type="SUPFAM" id="SSF55021">
    <property type="entry name" value="ACT-like"/>
    <property type="match status" value="2"/>
</dbReference>
<dbReference type="SUPFAM" id="SSF53633">
    <property type="entry name" value="Carbamate kinase-like"/>
    <property type="match status" value="1"/>
</dbReference>
<dbReference type="PROSITE" id="PS51671">
    <property type="entry name" value="ACT"/>
    <property type="match status" value="1"/>
</dbReference>
<dbReference type="PROSITE" id="PS00324">
    <property type="entry name" value="ASPARTOKINASE"/>
    <property type="match status" value="1"/>
</dbReference>
<proteinExistence type="evidence at protein level"/>
<accession>A4VJB4</accession>
<gene>
    <name type="primary">lysC</name>
    <name type="synonym">ask_lysC</name>
    <name type="ordered locus">PST_1370</name>
</gene>
<evidence type="ECO:0000250" key="1"/>
<evidence type="ECO:0000255" key="2">
    <source>
        <dbReference type="PROSITE-ProRule" id="PRU01007"/>
    </source>
</evidence>
<evidence type="ECO:0000269" key="3">
    <source>
    </source>
</evidence>
<evidence type="ECO:0000305" key="4"/>
<keyword id="KW-0021">Allosteric enzyme</keyword>
<keyword id="KW-0028">Amino-acid biosynthesis</keyword>
<keyword id="KW-0067">ATP-binding</keyword>
<keyword id="KW-0963">Cytoplasm</keyword>
<keyword id="KW-0220">Diaminopimelate biosynthesis</keyword>
<keyword id="KW-0903">Direct protein sequencing</keyword>
<keyword id="KW-0418">Kinase</keyword>
<keyword id="KW-0457">Lysine biosynthesis</keyword>
<keyword id="KW-0486">Methionine biosynthesis</keyword>
<keyword id="KW-0547">Nucleotide-binding</keyword>
<keyword id="KW-1185">Reference proteome</keyword>
<keyword id="KW-0791">Threonine biosynthesis</keyword>
<keyword id="KW-0808">Transferase</keyword>
<name>AKLYS_STUS1</name>
<reference key="1">
    <citation type="journal article" date="2008" name="Proc. Natl. Acad. Sci. U.S.A.">
        <title>Nitrogen fixation island and rhizosphere competence traits in the genome of root-associated Pseudomonas stutzeri A1501.</title>
        <authorList>
            <person name="Yan Y."/>
            <person name="Yang J."/>
            <person name="Dou Y."/>
            <person name="Chen M."/>
            <person name="Ping S."/>
            <person name="Peng J."/>
            <person name="Lu W."/>
            <person name="Zhang W."/>
            <person name="Yao Z."/>
            <person name="Li H."/>
            <person name="Liu W."/>
            <person name="He S."/>
            <person name="Geng L."/>
            <person name="Zhang X."/>
            <person name="Yang F."/>
            <person name="Yu H."/>
            <person name="Zhan Y."/>
            <person name="Li D."/>
            <person name="Lin Z."/>
            <person name="Wang Y."/>
            <person name="Elmerich C."/>
            <person name="Lin M."/>
            <person name="Jin Q."/>
        </authorList>
    </citation>
    <scope>NUCLEOTIDE SEQUENCE [LARGE SCALE GENOMIC DNA]</scope>
    <source>
        <strain>A1501</strain>
    </source>
</reference>
<reference key="2">
    <citation type="journal article" date="2011" name="J. Bacteriol.">
        <title>A specialized aspartokinase enhances the biosynthesis of the osmoprotectants ectoine and hydroxyectoine in Pseudomonas stutzeri A1501.</title>
        <authorList>
            <person name="Stoveken N."/>
            <person name="Pittelkow M."/>
            <person name="Sinner T."/>
            <person name="Jensen R.A."/>
            <person name="Heider J."/>
            <person name="Bremer E."/>
        </authorList>
    </citation>
    <scope>PROTEIN SEQUENCE OF 248-255</scope>
    <scope>FUNCTION</scope>
    <scope>CATALYTIC ACTIVITY</scope>
    <scope>INDUCTION</scope>
    <scope>BIOPHYSICOCHEMICAL PROPERTIES</scope>
    <scope>ACTIVITY REGULATION</scope>
    <scope>SUBUNIT</scope>
</reference>
<feature type="chain" id="PRO_0000428882" description="Aspartate kinase Ask_LysC">
    <location>
        <begin position="1"/>
        <end position="412"/>
    </location>
</feature>
<feature type="domain" description="ACT" evidence="2">
    <location>
        <begin position="265"/>
        <end position="332"/>
    </location>
</feature>
<organism>
    <name type="scientific">Stutzerimonas stutzeri (strain A1501)</name>
    <name type="common">Pseudomonas stutzeri</name>
    <dbReference type="NCBI Taxonomy" id="379731"/>
    <lineage>
        <taxon>Bacteria</taxon>
        <taxon>Pseudomonadati</taxon>
        <taxon>Pseudomonadota</taxon>
        <taxon>Gammaproteobacteria</taxon>
        <taxon>Pseudomonadales</taxon>
        <taxon>Pseudomonadaceae</taxon>
        <taxon>Stutzerimonas</taxon>
    </lineage>
</organism>
<protein>
    <recommendedName>
        <fullName>Aspartate kinase Ask_LysC</fullName>
        <ecNumber>2.7.2.4</ecNumber>
    </recommendedName>
    <alternativeName>
        <fullName>Aspartokinase</fullName>
    </alternativeName>
</protein>